<sequence length="417" mass="43417">MARKIGSRYTAHQILGRGSAGTVWLGEGPDGPVAIKLLREDLASDQELVSRFVQERTALLGLDHPHVVSVRDLVVDGNDLALVMDLVRGTDLRTRLDRERRLAPEAAVAVVADVADGLAAAHAAGVVHRDVKPENVLLDMQGPLGPGGSHPALLTDFGVAKLIDTPRRTRATKIIGTPDYLAPEIVEGLPPRAAVDIYALATVLYELLAGFTPFGGGHPGAVLRRHVTETVVPLPGIPDELWQLLVQCLAKAPASRLRASELSARLRELLPMLAGMAPLDVDEPDAEQPEDAPDASAASPAAPVSTAEPVRRRGAVPLVPGAKPADSNRDTHTSMRVPAPDELAGGARGTARAPRASGAPRPGSARNRAATRRRRIAVGAGAVALVAAIGVGTWLATGGDEDGGGPQDTRNSAPAAP</sequence>
<name>PKAB_STRCO</name>
<protein>
    <recommendedName>
        <fullName>Serine/threonine-protein kinase PkaB</fullName>
        <ecNumber>2.7.11.1</ecNumber>
    </recommendedName>
</protein>
<feature type="chain" id="PRO_0000171233" description="Serine/threonine-protein kinase PkaB">
    <location>
        <begin position="1"/>
        <end position="417"/>
    </location>
</feature>
<feature type="domain" description="Protein kinase" evidence="1">
    <location>
        <begin position="9"/>
        <end position="270"/>
    </location>
</feature>
<feature type="region of interest" description="Disordered" evidence="3">
    <location>
        <begin position="279"/>
        <end position="371"/>
    </location>
</feature>
<feature type="region of interest" description="Disordered" evidence="3">
    <location>
        <begin position="395"/>
        <end position="417"/>
    </location>
</feature>
<feature type="compositionally biased region" description="Acidic residues" evidence="3">
    <location>
        <begin position="280"/>
        <end position="293"/>
    </location>
</feature>
<feature type="compositionally biased region" description="Low complexity" evidence="3">
    <location>
        <begin position="294"/>
        <end position="308"/>
    </location>
</feature>
<feature type="compositionally biased region" description="Low complexity" evidence="3">
    <location>
        <begin position="349"/>
        <end position="368"/>
    </location>
</feature>
<feature type="compositionally biased region" description="Polar residues" evidence="3">
    <location>
        <begin position="408"/>
        <end position="417"/>
    </location>
</feature>
<feature type="active site" description="Proton acceptor" evidence="1 2">
    <location>
        <position position="130"/>
    </location>
</feature>
<feature type="binding site" evidence="1">
    <location>
        <begin position="15"/>
        <end position="23"/>
    </location>
    <ligand>
        <name>ATP</name>
        <dbReference type="ChEBI" id="CHEBI:30616"/>
    </ligand>
</feature>
<feature type="binding site" evidence="1">
    <location>
        <position position="36"/>
    </location>
    <ligand>
        <name>ATP</name>
        <dbReference type="ChEBI" id="CHEBI:30616"/>
    </ligand>
</feature>
<accession>P54740</accession>
<accession>Q9L061</accession>
<accession>Q9L1S2</accession>
<comment type="catalytic activity">
    <reaction>
        <text>L-seryl-[protein] + ATP = O-phospho-L-seryl-[protein] + ADP + H(+)</text>
        <dbReference type="Rhea" id="RHEA:17989"/>
        <dbReference type="Rhea" id="RHEA-COMP:9863"/>
        <dbReference type="Rhea" id="RHEA-COMP:11604"/>
        <dbReference type="ChEBI" id="CHEBI:15378"/>
        <dbReference type="ChEBI" id="CHEBI:29999"/>
        <dbReference type="ChEBI" id="CHEBI:30616"/>
        <dbReference type="ChEBI" id="CHEBI:83421"/>
        <dbReference type="ChEBI" id="CHEBI:456216"/>
        <dbReference type="EC" id="2.7.11.1"/>
    </reaction>
</comment>
<comment type="catalytic activity">
    <reaction>
        <text>L-threonyl-[protein] + ATP = O-phospho-L-threonyl-[protein] + ADP + H(+)</text>
        <dbReference type="Rhea" id="RHEA:46608"/>
        <dbReference type="Rhea" id="RHEA-COMP:11060"/>
        <dbReference type="Rhea" id="RHEA-COMP:11605"/>
        <dbReference type="ChEBI" id="CHEBI:15378"/>
        <dbReference type="ChEBI" id="CHEBI:30013"/>
        <dbReference type="ChEBI" id="CHEBI:30616"/>
        <dbReference type="ChEBI" id="CHEBI:61977"/>
        <dbReference type="ChEBI" id="CHEBI:456216"/>
        <dbReference type="EC" id="2.7.11.1"/>
    </reaction>
</comment>
<comment type="PTM">
    <text>Autophosphorylated mainly at Thr.</text>
</comment>
<comment type="similarity">
    <text evidence="1">Belongs to the protein kinase superfamily. Ser/Thr protein kinase family.</text>
</comment>
<organism>
    <name type="scientific">Streptomyces coelicolor (strain ATCC BAA-471 / A3(2) / M145)</name>
    <dbReference type="NCBI Taxonomy" id="100226"/>
    <lineage>
        <taxon>Bacteria</taxon>
        <taxon>Bacillati</taxon>
        <taxon>Actinomycetota</taxon>
        <taxon>Actinomycetes</taxon>
        <taxon>Kitasatosporales</taxon>
        <taxon>Streptomycetaceae</taxon>
        <taxon>Streptomyces</taxon>
        <taxon>Streptomyces albidoflavus group</taxon>
    </lineage>
</organism>
<gene>
    <name type="primary">pkaB</name>
    <name type="ordered locus">SCO2973</name>
    <name type="ORF">SCE50.01</name>
    <name type="ORF">SCE59.32c</name>
</gene>
<reference key="1">
    <citation type="journal article" date="1995" name="Gene">
        <title>Cloning, sequencing and expression of serine/threonine kinase-encoding genes from Streptomyces coelicolor A3(2).</title>
        <authorList>
            <person name="Urabe H."/>
            <person name="Ogawara H."/>
        </authorList>
    </citation>
    <scope>NUCLEOTIDE SEQUENCE [GENOMIC DNA]</scope>
    <source>
        <strain>A3(2) / NRRL B-16638</strain>
    </source>
</reference>
<reference key="2">
    <citation type="journal article" date="2002" name="Nature">
        <title>Complete genome sequence of the model actinomycete Streptomyces coelicolor A3(2).</title>
        <authorList>
            <person name="Bentley S.D."/>
            <person name="Chater K.F."/>
            <person name="Cerdeno-Tarraga A.-M."/>
            <person name="Challis G.L."/>
            <person name="Thomson N.R."/>
            <person name="James K.D."/>
            <person name="Harris D.E."/>
            <person name="Quail M.A."/>
            <person name="Kieser H."/>
            <person name="Harper D."/>
            <person name="Bateman A."/>
            <person name="Brown S."/>
            <person name="Chandra G."/>
            <person name="Chen C.W."/>
            <person name="Collins M."/>
            <person name="Cronin A."/>
            <person name="Fraser A."/>
            <person name="Goble A."/>
            <person name="Hidalgo J."/>
            <person name="Hornsby T."/>
            <person name="Howarth S."/>
            <person name="Huang C.-H."/>
            <person name="Kieser T."/>
            <person name="Larke L."/>
            <person name="Murphy L.D."/>
            <person name="Oliver K."/>
            <person name="O'Neil S."/>
            <person name="Rabbinowitsch E."/>
            <person name="Rajandream M.A."/>
            <person name="Rutherford K.M."/>
            <person name="Rutter S."/>
            <person name="Seeger K."/>
            <person name="Saunders D."/>
            <person name="Sharp S."/>
            <person name="Squares R."/>
            <person name="Squares S."/>
            <person name="Taylor K."/>
            <person name="Warren T."/>
            <person name="Wietzorrek A."/>
            <person name="Woodward J.R."/>
            <person name="Barrell B.G."/>
            <person name="Parkhill J."/>
            <person name="Hopwood D.A."/>
        </authorList>
    </citation>
    <scope>NUCLEOTIDE SEQUENCE [LARGE SCALE GENOMIC DNA]</scope>
    <source>
        <strain>ATCC BAA-471 / A3(2) / M145</strain>
    </source>
</reference>
<proteinExistence type="inferred from homology"/>
<evidence type="ECO:0000255" key="1">
    <source>
        <dbReference type="PROSITE-ProRule" id="PRU00159"/>
    </source>
</evidence>
<evidence type="ECO:0000255" key="2">
    <source>
        <dbReference type="PROSITE-ProRule" id="PRU10027"/>
    </source>
</evidence>
<evidence type="ECO:0000256" key="3">
    <source>
        <dbReference type="SAM" id="MobiDB-lite"/>
    </source>
</evidence>
<keyword id="KW-0067">ATP-binding</keyword>
<keyword id="KW-0418">Kinase</keyword>
<keyword id="KW-0547">Nucleotide-binding</keyword>
<keyword id="KW-0597">Phosphoprotein</keyword>
<keyword id="KW-1185">Reference proteome</keyword>
<keyword id="KW-0723">Serine/threonine-protein kinase</keyword>
<keyword id="KW-0808">Transferase</keyword>
<dbReference type="EC" id="2.7.11.1"/>
<dbReference type="EMBL" id="D86821">
    <property type="protein sequence ID" value="BAA13169.1"/>
    <property type="molecule type" value="Genomic_DNA"/>
</dbReference>
<dbReference type="EMBL" id="AL939114">
    <property type="protein sequence ID" value="CAD55460.1"/>
    <property type="molecule type" value="Genomic_DNA"/>
</dbReference>
<dbReference type="PIR" id="JC4071">
    <property type="entry name" value="JC4071"/>
</dbReference>
<dbReference type="RefSeq" id="NP_733588.1">
    <property type="nucleotide sequence ID" value="NC_003888.3"/>
</dbReference>
<dbReference type="RefSeq" id="WP_011028691.1">
    <property type="nucleotide sequence ID" value="NZ_VNID01000010.1"/>
</dbReference>
<dbReference type="SMR" id="P54740"/>
<dbReference type="STRING" id="100226.gene:17760585"/>
<dbReference type="PaxDb" id="100226-SCO2973"/>
<dbReference type="KEGG" id="sco:SCO2973"/>
<dbReference type="PATRIC" id="fig|100226.15.peg.3031"/>
<dbReference type="eggNOG" id="COG0515">
    <property type="taxonomic scope" value="Bacteria"/>
</dbReference>
<dbReference type="HOGENOM" id="CLU_000288_63_44_11"/>
<dbReference type="InParanoid" id="P54740"/>
<dbReference type="OrthoDB" id="9762169at2"/>
<dbReference type="PhylomeDB" id="P54740"/>
<dbReference type="BRENDA" id="2.7.11.1">
    <property type="organism ID" value="5998"/>
</dbReference>
<dbReference type="Proteomes" id="UP000001973">
    <property type="component" value="Chromosome"/>
</dbReference>
<dbReference type="GO" id="GO:0005524">
    <property type="term" value="F:ATP binding"/>
    <property type="evidence" value="ECO:0007669"/>
    <property type="project" value="UniProtKB-KW"/>
</dbReference>
<dbReference type="GO" id="GO:0106310">
    <property type="term" value="F:protein serine kinase activity"/>
    <property type="evidence" value="ECO:0007669"/>
    <property type="project" value="RHEA"/>
</dbReference>
<dbReference type="GO" id="GO:0004674">
    <property type="term" value="F:protein serine/threonine kinase activity"/>
    <property type="evidence" value="ECO:0000318"/>
    <property type="project" value="GO_Central"/>
</dbReference>
<dbReference type="CDD" id="cd14014">
    <property type="entry name" value="STKc_PknB_like"/>
    <property type="match status" value="1"/>
</dbReference>
<dbReference type="FunFam" id="1.10.510.10:FF:000598">
    <property type="entry name" value="Serine/threonine protein kinase"/>
    <property type="match status" value="1"/>
</dbReference>
<dbReference type="FunFam" id="3.30.200.20:FF:000338">
    <property type="entry name" value="Serine/threonine protein kinase"/>
    <property type="match status" value="1"/>
</dbReference>
<dbReference type="Gene3D" id="3.30.200.20">
    <property type="entry name" value="Phosphorylase Kinase, domain 1"/>
    <property type="match status" value="1"/>
</dbReference>
<dbReference type="Gene3D" id="1.10.510.10">
    <property type="entry name" value="Transferase(Phosphotransferase) domain 1"/>
    <property type="match status" value="1"/>
</dbReference>
<dbReference type="InterPro" id="IPR011009">
    <property type="entry name" value="Kinase-like_dom_sf"/>
</dbReference>
<dbReference type="InterPro" id="IPR000719">
    <property type="entry name" value="Prot_kinase_dom"/>
</dbReference>
<dbReference type="InterPro" id="IPR008271">
    <property type="entry name" value="Ser/Thr_kinase_AS"/>
</dbReference>
<dbReference type="PANTHER" id="PTHR43289">
    <property type="entry name" value="MITOGEN-ACTIVATED PROTEIN KINASE KINASE KINASE 20-RELATED"/>
    <property type="match status" value="1"/>
</dbReference>
<dbReference type="PANTHER" id="PTHR43289:SF6">
    <property type="entry name" value="SERINE_THREONINE-PROTEIN KINASE NEKL-3"/>
    <property type="match status" value="1"/>
</dbReference>
<dbReference type="Pfam" id="PF00069">
    <property type="entry name" value="Pkinase"/>
    <property type="match status" value="1"/>
</dbReference>
<dbReference type="SMART" id="SM00220">
    <property type="entry name" value="S_TKc"/>
    <property type="match status" value="1"/>
</dbReference>
<dbReference type="SUPFAM" id="SSF56112">
    <property type="entry name" value="Protein kinase-like (PK-like)"/>
    <property type="match status" value="1"/>
</dbReference>
<dbReference type="PROSITE" id="PS50011">
    <property type="entry name" value="PROTEIN_KINASE_DOM"/>
    <property type="match status" value="1"/>
</dbReference>
<dbReference type="PROSITE" id="PS00108">
    <property type="entry name" value="PROTEIN_KINASE_ST"/>
    <property type="match status" value="1"/>
</dbReference>